<sequence length="74" mass="8823">MHNLHCLAMLIPLNISRHPFSATRLFINWSKCQLSQRMILLILIFATFQRQRDLIIPRFLLLIYSVIQCLFLHS</sequence>
<proteinExistence type="uncertain"/>
<feature type="chain" id="PRO_0000309052" description="Putative uncharacterized protein YMR141W-A">
    <location>
        <begin position="1"/>
        <end position="74"/>
    </location>
</feature>
<feature type="transmembrane region" description="Helical" evidence="1">
    <location>
        <begin position="54"/>
        <end position="72"/>
    </location>
</feature>
<name>YM141_YEAST</name>
<comment type="subcellular location">
    <subcellularLocation>
        <location evidence="2">Membrane</location>
        <topology evidence="2">Single-pass membrane protein</topology>
    </subcellularLocation>
</comment>
<comment type="miscellaneous">
    <text evidence="2">Completely overlaps RPL13B.</text>
</comment>
<comment type="caution">
    <text evidence="3">Product of a dubious gene prediction unlikely to encode a functional protein. Because of that it is not part of the S.cerevisiae S288c complete/reference proteome set.</text>
</comment>
<protein>
    <recommendedName>
        <fullName>Putative uncharacterized protein YMR141W-A</fullName>
    </recommendedName>
</protein>
<keyword id="KW-0472">Membrane</keyword>
<keyword id="KW-0812">Transmembrane</keyword>
<keyword id="KW-1133">Transmembrane helix</keyword>
<evidence type="ECO:0000255" key="1"/>
<evidence type="ECO:0000305" key="2"/>
<evidence type="ECO:0000305" key="3">
    <source>
    </source>
</evidence>
<gene>
    <name type="ordered locus">YMR141W-A</name>
    <name type="ORF">smORF532</name>
</gene>
<accession>P0C5Q4</accession>
<reference key="1">
    <citation type="journal article" date="1997" name="Nature">
        <title>The nucleotide sequence of Saccharomyces cerevisiae chromosome XIII.</title>
        <authorList>
            <person name="Bowman S."/>
            <person name="Churcher C.M."/>
            <person name="Badcock K."/>
            <person name="Brown D."/>
            <person name="Chillingworth T."/>
            <person name="Connor R."/>
            <person name="Dedman K."/>
            <person name="Devlin K."/>
            <person name="Gentles S."/>
            <person name="Hamlin N."/>
            <person name="Hunt S."/>
            <person name="Jagels K."/>
            <person name="Lye G."/>
            <person name="Moule S."/>
            <person name="Odell C."/>
            <person name="Pearson D."/>
            <person name="Rajandream M.A."/>
            <person name="Rice P."/>
            <person name="Skelton J."/>
            <person name="Walsh S.V."/>
            <person name="Whitehead S."/>
            <person name="Barrell B.G."/>
        </authorList>
    </citation>
    <scope>NUCLEOTIDE SEQUENCE [LARGE SCALE GENOMIC DNA]</scope>
    <source>
        <strain>ATCC 204508 / S288c</strain>
    </source>
</reference>
<reference key="2">
    <citation type="journal article" date="2014" name="G3 (Bethesda)">
        <title>The reference genome sequence of Saccharomyces cerevisiae: Then and now.</title>
        <authorList>
            <person name="Engel S.R."/>
            <person name="Dietrich F.S."/>
            <person name="Fisk D.G."/>
            <person name="Binkley G."/>
            <person name="Balakrishnan R."/>
            <person name="Costanzo M.C."/>
            <person name="Dwight S.S."/>
            <person name="Hitz B.C."/>
            <person name="Karra K."/>
            <person name="Nash R.S."/>
            <person name="Weng S."/>
            <person name="Wong E.D."/>
            <person name="Lloyd P."/>
            <person name="Skrzypek M.S."/>
            <person name="Miyasato S.R."/>
            <person name="Simison M."/>
            <person name="Cherry J.M."/>
        </authorList>
    </citation>
    <scope>GENOME REANNOTATION</scope>
    <source>
        <strain>ATCC 204508 / S288c</strain>
    </source>
</reference>
<reference key="3">
    <citation type="journal article" date="2003" name="Genome Res.">
        <title>Systematic discovery of new genes in the Saccharomyces cerevisiae genome.</title>
        <authorList>
            <person name="Kessler M.M."/>
            <person name="Zeng Q."/>
            <person name="Hogan S."/>
            <person name="Cook R."/>
            <person name="Morales A.J."/>
            <person name="Cottarel G."/>
        </authorList>
    </citation>
    <scope>GENOME REANNOTATION</scope>
</reference>
<dbReference type="EMBL" id="Z47071">
    <property type="status" value="NOT_ANNOTATED_CDS"/>
    <property type="molecule type" value="Genomic_DNA"/>
</dbReference>
<dbReference type="PaxDb" id="4932-YMR141W-A"/>
<dbReference type="EnsemblFungi" id="YMR141W-A_mRNA">
    <property type="protein sequence ID" value="YMR141W-A"/>
    <property type="gene ID" value="YMR141W-A"/>
</dbReference>
<dbReference type="AGR" id="SGD:S000028575"/>
<dbReference type="SGD" id="S000028575">
    <property type="gene designation" value="YMR141W-A"/>
</dbReference>
<dbReference type="HOGENOM" id="CLU_2689706_0_0_1"/>
<dbReference type="GO" id="GO:0016020">
    <property type="term" value="C:membrane"/>
    <property type="evidence" value="ECO:0007669"/>
    <property type="project" value="UniProtKB-SubCell"/>
</dbReference>
<organism>
    <name type="scientific">Saccharomyces cerevisiae (strain ATCC 204508 / S288c)</name>
    <name type="common">Baker's yeast</name>
    <dbReference type="NCBI Taxonomy" id="559292"/>
    <lineage>
        <taxon>Eukaryota</taxon>
        <taxon>Fungi</taxon>
        <taxon>Dikarya</taxon>
        <taxon>Ascomycota</taxon>
        <taxon>Saccharomycotina</taxon>
        <taxon>Saccharomycetes</taxon>
        <taxon>Saccharomycetales</taxon>
        <taxon>Saccharomycetaceae</taxon>
        <taxon>Saccharomyces</taxon>
    </lineage>
</organism>